<keyword id="KW-0037">Angiogenesis</keyword>
<keyword id="KW-0106">Calcium</keyword>
<keyword id="KW-0175">Coiled coil</keyword>
<keyword id="KW-0217">Developmental protein</keyword>
<keyword id="KW-0221">Differentiation</keyword>
<keyword id="KW-1015">Disulfide bond</keyword>
<keyword id="KW-0325">Glycoprotein</keyword>
<keyword id="KW-0479">Metal-binding</keyword>
<keyword id="KW-1185">Reference proteome</keyword>
<keyword id="KW-0964">Secreted</keyword>
<keyword id="KW-0732">Signal</keyword>
<name>ANGP2_BOVIN</name>
<gene>
    <name type="primary">ANGPT2</name>
    <name type="synonym">ANG2</name>
</gene>
<comment type="function">
    <text evidence="2">Binds to TEK/TIE2, competing for the ANGPT1 binding site, and modulating ANGPT1 signaling (By similarity). Can induce tyrosine phosphorylation of TEK/TIE2 in the absence of ANGPT1 (By similarity). In the absence of angiogenic inducers, such as VEGF, ANGPT2-mediated loosening of cell-matrix contacts may induce endothelial cell apoptosis with consequent vascular regression (By similarity). In concert with VEGF, it may facilitate endothelial cell migration and proliferation, thus serving as a permissive angiogenic signal (By similarity). Involved in the regulation of lymphangiogenesis (By similarity).</text>
</comment>
<comment type="subunit">
    <text evidence="2 3">Interacts with TEK/TIE2, competing for the same binding site as ANGPT1 (By similarity). Interacts with ITGA5 (By similarity). Interacts with SVEP1/polydom (By similarity). Interacts with THBD; this interaction significantly inhibits the generation of activated PC and TAFIa/CPB2 by the thrombin/thrombomodulin complex (By similarity).</text>
</comment>
<comment type="subcellular location">
    <subcellularLocation>
        <location evidence="2">Secreted</location>
    </subcellularLocation>
</comment>
<comment type="developmental stage">
    <text evidence="6">Found to be expressed throughout the ovarian cycle (PubMed:9840613). Overexpressed during luteolysis, this could reflect the regression of capillaries that had developed pericyte contact in the midstage corpus luteum (PubMed:9840613).</text>
</comment>
<comment type="domain">
    <text evidence="1">The Fibrinogen C-terminal domain mediates interaction with the TEK/TIE2 receptor.</text>
</comment>
<protein>
    <recommendedName>
        <fullName>Angiopoietin-2</fullName>
        <shortName>ANG-2</shortName>
    </recommendedName>
</protein>
<feature type="signal peptide" evidence="4">
    <location>
        <begin position="1"/>
        <end position="18"/>
    </location>
</feature>
<feature type="chain" id="PRO_0000099063" description="Angiopoietin-2">
    <location>
        <begin position="19"/>
        <end position="496"/>
    </location>
</feature>
<feature type="domain" description="Fibrinogen C-terminal" evidence="5">
    <location>
        <begin position="275"/>
        <end position="495"/>
    </location>
</feature>
<feature type="coiled-coil region" evidence="4">
    <location>
        <begin position="167"/>
        <end position="249"/>
    </location>
</feature>
<feature type="binding site" evidence="2">
    <location>
        <position position="429"/>
    </location>
    <ligand>
        <name>Ca(2+)</name>
        <dbReference type="ChEBI" id="CHEBI:29108"/>
    </ligand>
</feature>
<feature type="binding site" evidence="2">
    <location>
        <position position="431"/>
    </location>
    <ligand>
        <name>Ca(2+)</name>
        <dbReference type="ChEBI" id="CHEBI:29108"/>
    </ligand>
</feature>
<feature type="binding site" evidence="2">
    <location>
        <position position="433"/>
    </location>
    <ligand>
        <name>Ca(2+)</name>
        <dbReference type="ChEBI" id="CHEBI:29108"/>
    </ligand>
</feature>
<feature type="binding site" evidence="2">
    <location>
        <position position="435"/>
    </location>
    <ligand>
        <name>Ca(2+)</name>
        <dbReference type="ChEBI" id="CHEBI:29108"/>
    </ligand>
</feature>
<feature type="glycosylation site" description="N-linked (GlcNAc...) asparagine" evidence="4">
    <location>
        <position position="90"/>
    </location>
</feature>
<feature type="glycosylation site" description="N-linked (GlcNAc...) asparagine" evidence="4">
    <location>
        <position position="120"/>
    </location>
</feature>
<feature type="glycosylation site" description="N-linked (GlcNAc...) asparagine" evidence="4">
    <location>
        <position position="134"/>
    </location>
</feature>
<feature type="glycosylation site" description="N-linked (GlcNAc...) asparagine" evidence="4">
    <location>
        <position position="152"/>
    </location>
</feature>
<feature type="glycosylation site" description="N-linked (GlcNAc...) asparagine" evidence="4">
    <location>
        <position position="241"/>
    </location>
</feature>
<feature type="glycosylation site" description="N-linked (GlcNAc...) asparagine" evidence="4">
    <location>
        <position position="304"/>
    </location>
</feature>
<feature type="disulfide bond" evidence="5">
    <location>
        <begin position="284"/>
        <end position="313"/>
    </location>
</feature>
<feature type="disulfide bond" evidence="5">
    <location>
        <begin position="433"/>
        <end position="435"/>
    </location>
</feature>
<feature type="disulfide bond" evidence="5">
    <location>
        <begin position="437"/>
        <end position="450"/>
    </location>
</feature>
<feature type="sequence conflict" description="In Ref. 3; AAC78285." evidence="7" ref="3">
    <original>S</original>
    <variation>L</variation>
    <location>
        <position position="393"/>
    </location>
</feature>
<proteinExistence type="evidence at transcript level"/>
<organism>
    <name type="scientific">Bos taurus</name>
    <name type="common">Bovine</name>
    <dbReference type="NCBI Taxonomy" id="9913"/>
    <lineage>
        <taxon>Eukaryota</taxon>
        <taxon>Metazoa</taxon>
        <taxon>Chordata</taxon>
        <taxon>Craniata</taxon>
        <taxon>Vertebrata</taxon>
        <taxon>Euteleostomi</taxon>
        <taxon>Mammalia</taxon>
        <taxon>Eutheria</taxon>
        <taxon>Laurasiatheria</taxon>
        <taxon>Artiodactyla</taxon>
        <taxon>Ruminantia</taxon>
        <taxon>Pecora</taxon>
        <taxon>Bovidae</taxon>
        <taxon>Bovinae</taxon>
        <taxon>Bos</taxon>
    </lineage>
</organism>
<accession>O77802</accession>
<accession>A5PKF7</accession>
<accession>Q9TSK0</accession>
<reference key="1">
    <citation type="submission" date="2007-06" db="EMBL/GenBank/DDBJ databases">
        <authorList>
            <consortium name="NIH - Mammalian Gene Collection (MGC) project"/>
        </authorList>
    </citation>
    <scope>NUCLEOTIDE SEQUENCE [LARGE SCALE MRNA]</scope>
    <source>
        <strain>Hereford</strain>
        <tissue>Fetal muscle</tissue>
    </source>
</reference>
<reference key="2">
    <citation type="journal article" date="1998" name="Lab. Invest.">
        <title>Analysis of blood vessel maturation processes during cyclic ovarian angiogenesis.</title>
        <authorList>
            <person name="Goede V."/>
            <person name="Schmidt T."/>
            <person name="Kimmina S."/>
            <person name="Kozian D."/>
            <person name="Augustin H.G."/>
        </authorList>
    </citation>
    <scope>NUCLEOTIDE SEQUENCE [MRNA] OF 122-496</scope>
    <scope>DEVELOPMENTAL STAGE</scope>
    <source>
        <tissue>Ovary</tissue>
    </source>
</reference>
<reference key="3">
    <citation type="journal article" date="1998" name="Circ. Res.">
        <title>Regulation of angiopoietin-2 mRNA levels in bovine microvascular endothelial cells by cytokines and hypoxia.</title>
        <authorList>
            <person name="Mandriota S.J."/>
            <person name="Pepper M.S."/>
        </authorList>
    </citation>
    <scope>NUCLEOTIDE SEQUENCE [MRNA] OF 340-476</scope>
    <source>
        <tissue>Adrenal cortex</tissue>
    </source>
</reference>
<dbReference type="EMBL" id="BC142471">
    <property type="protein sequence ID" value="AAI42472.1"/>
    <property type="molecule type" value="mRNA"/>
</dbReference>
<dbReference type="EMBL" id="AF094699">
    <property type="protein sequence ID" value="AAC62490.1"/>
    <property type="molecule type" value="mRNA"/>
</dbReference>
<dbReference type="EMBL" id="AF032924">
    <property type="protein sequence ID" value="AAC78285.1"/>
    <property type="molecule type" value="mRNA"/>
</dbReference>
<dbReference type="RefSeq" id="NP_001092325.1">
    <property type="nucleotide sequence ID" value="NM_001098855.1"/>
</dbReference>
<dbReference type="SMR" id="O77802"/>
<dbReference type="FunCoup" id="O77802">
    <property type="interactions" value="413"/>
</dbReference>
<dbReference type="STRING" id="9913.ENSBTAP00000014656"/>
<dbReference type="GlyCosmos" id="O77802">
    <property type="glycosylation" value="6 sites, No reported glycans"/>
</dbReference>
<dbReference type="GlyGen" id="O77802">
    <property type="glycosylation" value="6 sites"/>
</dbReference>
<dbReference type="PaxDb" id="9913-ENSBTAP00000014656"/>
<dbReference type="Ensembl" id="ENSBTAT00000014656.7">
    <property type="protein sequence ID" value="ENSBTAP00000014656.5"/>
    <property type="gene ID" value="ENSBTAG00000011034.7"/>
</dbReference>
<dbReference type="GeneID" id="282141"/>
<dbReference type="KEGG" id="bta:282141"/>
<dbReference type="CTD" id="285"/>
<dbReference type="VEuPathDB" id="HostDB:ENSBTAG00000011034"/>
<dbReference type="VGNC" id="VGNC:25888">
    <property type="gene designation" value="ANGPT2"/>
</dbReference>
<dbReference type="eggNOG" id="KOG2579">
    <property type="taxonomic scope" value="Eukaryota"/>
</dbReference>
<dbReference type="GeneTree" id="ENSGT00940000158430"/>
<dbReference type="HOGENOM" id="CLU_038628_3_1_1"/>
<dbReference type="InParanoid" id="O77802"/>
<dbReference type="OMA" id="YYWKGAG"/>
<dbReference type="OrthoDB" id="7735366at2759"/>
<dbReference type="TreeFam" id="TF336658"/>
<dbReference type="Reactome" id="R-BTA-210993">
    <property type="pathway name" value="Tie2 Signaling"/>
</dbReference>
<dbReference type="Proteomes" id="UP000009136">
    <property type="component" value="Chromosome 27"/>
</dbReference>
<dbReference type="Bgee" id="ENSBTAG00000011034">
    <property type="expression patterns" value="Expressed in thyroid gland and 105 other cell types or tissues"/>
</dbReference>
<dbReference type="GO" id="GO:0062023">
    <property type="term" value="C:collagen-containing extracellular matrix"/>
    <property type="evidence" value="ECO:0000318"/>
    <property type="project" value="GO_Central"/>
</dbReference>
<dbReference type="GO" id="GO:0005615">
    <property type="term" value="C:extracellular space"/>
    <property type="evidence" value="ECO:0000318"/>
    <property type="project" value="GO_Central"/>
</dbReference>
<dbReference type="GO" id="GO:0046872">
    <property type="term" value="F:metal ion binding"/>
    <property type="evidence" value="ECO:0007669"/>
    <property type="project" value="UniProtKB-KW"/>
</dbReference>
<dbReference type="GO" id="GO:0048018">
    <property type="term" value="F:receptor ligand activity"/>
    <property type="evidence" value="ECO:0007669"/>
    <property type="project" value="Ensembl"/>
</dbReference>
<dbReference type="GO" id="GO:0030971">
    <property type="term" value="F:receptor tyrosine kinase binding"/>
    <property type="evidence" value="ECO:0000318"/>
    <property type="project" value="GO_Central"/>
</dbReference>
<dbReference type="GO" id="GO:0001525">
    <property type="term" value="P:angiogenesis"/>
    <property type="evidence" value="ECO:0000318"/>
    <property type="project" value="GO_Central"/>
</dbReference>
<dbReference type="GO" id="GO:0007596">
    <property type="term" value="P:blood coagulation"/>
    <property type="evidence" value="ECO:0007669"/>
    <property type="project" value="InterPro"/>
</dbReference>
<dbReference type="GO" id="GO:0030154">
    <property type="term" value="P:cell differentiation"/>
    <property type="evidence" value="ECO:0007669"/>
    <property type="project" value="UniProtKB-KW"/>
</dbReference>
<dbReference type="GO" id="GO:0010467">
    <property type="term" value="P:gene expression"/>
    <property type="evidence" value="ECO:0007669"/>
    <property type="project" value="Ensembl"/>
</dbReference>
<dbReference type="GO" id="GO:0016525">
    <property type="term" value="P:negative regulation of angiogenesis"/>
    <property type="evidence" value="ECO:0007669"/>
    <property type="project" value="Ensembl"/>
</dbReference>
<dbReference type="GO" id="GO:0043537">
    <property type="term" value="P:negative regulation of blood vessel endothelial cell migration"/>
    <property type="evidence" value="ECO:0007669"/>
    <property type="project" value="Ensembl"/>
</dbReference>
<dbReference type="GO" id="GO:0010812">
    <property type="term" value="P:negative regulation of cell-substrate adhesion"/>
    <property type="evidence" value="ECO:0007669"/>
    <property type="project" value="Ensembl"/>
</dbReference>
<dbReference type="GO" id="GO:0050928">
    <property type="term" value="P:negative regulation of positive chemotaxis"/>
    <property type="evidence" value="ECO:0007669"/>
    <property type="project" value="Ensembl"/>
</dbReference>
<dbReference type="GO" id="GO:0050820">
    <property type="term" value="P:positive regulation of coagulation"/>
    <property type="evidence" value="ECO:0007669"/>
    <property type="project" value="Ensembl"/>
</dbReference>
<dbReference type="GO" id="GO:0048014">
    <property type="term" value="P:Tie signaling pathway"/>
    <property type="evidence" value="ECO:0000318"/>
    <property type="project" value="GO_Central"/>
</dbReference>
<dbReference type="CDD" id="cd00087">
    <property type="entry name" value="FReD"/>
    <property type="match status" value="1"/>
</dbReference>
<dbReference type="FunFam" id="4.10.530.10:FF:000001">
    <property type="entry name" value="angiopoietin-2 isoform X1"/>
    <property type="match status" value="1"/>
</dbReference>
<dbReference type="FunFam" id="3.90.215.10:FF:000001">
    <property type="entry name" value="Tenascin isoform 1"/>
    <property type="match status" value="1"/>
</dbReference>
<dbReference type="Gene3D" id="3.90.215.10">
    <property type="entry name" value="Gamma Fibrinogen, chain A, domain 1"/>
    <property type="match status" value="1"/>
</dbReference>
<dbReference type="Gene3D" id="4.10.530.10">
    <property type="entry name" value="Gamma-fibrinogen Carboxyl Terminal Fragment, domain 2"/>
    <property type="match status" value="1"/>
</dbReference>
<dbReference type="InterPro" id="IPR037579">
    <property type="entry name" value="FIB_ANG-like"/>
</dbReference>
<dbReference type="InterPro" id="IPR036056">
    <property type="entry name" value="Fibrinogen-like_C"/>
</dbReference>
<dbReference type="InterPro" id="IPR014716">
    <property type="entry name" value="Fibrinogen_a/b/g_C_1"/>
</dbReference>
<dbReference type="InterPro" id="IPR002181">
    <property type="entry name" value="Fibrinogen_a/b/g_C_dom"/>
</dbReference>
<dbReference type="InterPro" id="IPR020837">
    <property type="entry name" value="Fibrinogen_CS"/>
</dbReference>
<dbReference type="NCBIfam" id="NF040941">
    <property type="entry name" value="GGGWT_bact"/>
    <property type="match status" value="1"/>
</dbReference>
<dbReference type="PANTHER" id="PTHR47221">
    <property type="entry name" value="FIBRINOGEN ALPHA CHAIN"/>
    <property type="match status" value="1"/>
</dbReference>
<dbReference type="PANTHER" id="PTHR47221:SF6">
    <property type="entry name" value="FIBRINOGEN ALPHA CHAIN"/>
    <property type="match status" value="1"/>
</dbReference>
<dbReference type="Pfam" id="PF25443">
    <property type="entry name" value="ANG-1"/>
    <property type="match status" value="1"/>
</dbReference>
<dbReference type="Pfam" id="PF00147">
    <property type="entry name" value="Fibrinogen_C"/>
    <property type="match status" value="1"/>
</dbReference>
<dbReference type="SMART" id="SM00186">
    <property type="entry name" value="FBG"/>
    <property type="match status" value="1"/>
</dbReference>
<dbReference type="SUPFAM" id="SSF56496">
    <property type="entry name" value="Fibrinogen C-terminal domain-like"/>
    <property type="match status" value="1"/>
</dbReference>
<dbReference type="PROSITE" id="PS00514">
    <property type="entry name" value="FIBRINOGEN_C_1"/>
    <property type="match status" value="1"/>
</dbReference>
<dbReference type="PROSITE" id="PS51406">
    <property type="entry name" value="FIBRINOGEN_C_2"/>
    <property type="match status" value="1"/>
</dbReference>
<evidence type="ECO:0000250" key="1"/>
<evidence type="ECO:0000250" key="2">
    <source>
        <dbReference type="UniProtKB" id="O15123"/>
    </source>
</evidence>
<evidence type="ECO:0000250" key="3">
    <source>
        <dbReference type="UniProtKB" id="O35608"/>
    </source>
</evidence>
<evidence type="ECO:0000255" key="4"/>
<evidence type="ECO:0000255" key="5">
    <source>
        <dbReference type="PROSITE-ProRule" id="PRU00739"/>
    </source>
</evidence>
<evidence type="ECO:0000269" key="6">
    <source>
    </source>
</evidence>
<evidence type="ECO:0000305" key="7"/>
<sequence length="496" mass="56539">MWQLVFLTLSCDLAVATAHSGSRKGMDIAAGKKQYQVQHGACSYTFLLPETDHCRSPSSAYVPNAVQRDAPLDYDDSVQRLQVLENIMENNTQWLMKLENYIQDNMKKEMVEIQQNAVQNQTAVMIEIGTNLLNQTAEQTRKLTDVEAQVLNQTTRLELQLLEHSLSTNKLEKQILDQTSEISKLQDKNSFLEKKVLDMEDKHIVQLRSIKEEKDQLQVLVSKQNSIIEELEKQLVTATVNNSVLQKQQHDLMETVNNLLTLMSTSNPSYSLLAKDEQIIFRDCGEAFKSGLTTSGVYTLTFPNSTEEIKAYCDMETGGGGWTVIQRREDGSVDFQRTWKEYKVGFGNPSGEHWLGNEFVSQVTGQKRYVLKIHLRDWEGNEAYSLYDHFYLSNEELNYRIHLKGLTGTAGKISSISQPGNDFSTKDADNDKCICKCSQMLTGGWWFDACGPSNLNGMYYPQRQNTNKFNGIKWYYWKGSGYSLKATTMMIRPADF</sequence>